<gene>
    <name evidence="7" type="primary">fsa4</name>
</gene>
<reference key="1">
    <citation type="journal article" date="2015" name="Biochem. Biophys. Res. Commun.">
        <title>A new enzyme involved in the control of the stereochemistry in the decalin formation during equisetin biosynthesis.</title>
        <authorList>
            <person name="Kato N."/>
            <person name="Nogawa T."/>
            <person name="Hirota H."/>
            <person name="Jang J.H."/>
            <person name="Takahashi S."/>
            <person name="Ahn J.S."/>
            <person name="Osada H."/>
        </authorList>
    </citation>
    <scope>NUCLEOTIDE SEQUENCE [GENOMIC DNA]</scope>
    <scope>FUNCTION</scope>
    <scope>DISRUPTION PHENOTYPE</scope>
    <scope>PATHWAY</scope>
</reference>
<reference key="2">
    <citation type="journal article" date="2017" name="Chem. Commun. (Camb.)">
        <title>Chemo-enzymatic synthesis of equisetin.</title>
        <authorList>
            <person name="Li X."/>
            <person name="Zheng Q."/>
            <person name="Yin J."/>
            <person name="Liu W."/>
            <person name="Gao S."/>
        </authorList>
    </citation>
    <scope>FUNCTION</scope>
</reference>
<reference key="3">
    <citation type="journal article" date="2018" name="Angew. Chem. Int. Ed.">
        <title>Control of the stereochemical course of [4+2] cycloaddition during trans-decalin formation by Fsa2-family enzymes.</title>
        <authorList>
            <person name="Kato N."/>
            <person name="Nogawa T."/>
            <person name="Takita R."/>
            <person name="Kinugasa K."/>
            <person name="Kanai M."/>
            <person name="Uchiyama M."/>
            <person name="Osada H."/>
            <person name="Takahashi S."/>
        </authorList>
    </citation>
    <scope>FUNCTION</scope>
</reference>
<reference key="4">
    <citation type="journal article" date="2021" name="Angew. Chem. Int. Ed.">
        <title>Molecular basis for two stereoselective Diels-Alderases that produce decalin skeletons*.</title>
        <authorList>
            <person name="Fujiyama K."/>
            <person name="Kato N."/>
            <person name="Re S."/>
            <person name="Kinugasa K."/>
            <person name="Watanabe K."/>
            <person name="Takita R."/>
            <person name="Nogawa T."/>
            <person name="Hino T."/>
            <person name="Osada H."/>
            <person name="Sugita Y."/>
            <person name="Takahashi S."/>
            <person name="Nagano S."/>
        </authorList>
    </citation>
    <scope>FUNCTION</scope>
</reference>
<keyword id="KW-0489">Methyltransferase</keyword>
<keyword id="KW-0949">S-adenosyl-L-methionine</keyword>
<keyword id="KW-0808">Transferase</keyword>
<protein>
    <recommendedName>
        <fullName evidence="7">Methyltransferase fsa4</fullName>
        <ecNumber evidence="9">2.1.1.-</ecNumber>
    </recommendedName>
    <alternativeName>
        <fullName evidence="7">Fusarisetin A biosynthesis protein 4</fullName>
    </alternativeName>
</protein>
<organism>
    <name type="scientific">Fusarium sp. (strain FN080326)</name>
    <dbReference type="NCBI Taxonomy" id="1608308"/>
    <lineage>
        <taxon>Eukaryota</taxon>
        <taxon>Fungi</taxon>
        <taxon>Dikarya</taxon>
        <taxon>Ascomycota</taxon>
        <taxon>Pezizomycotina</taxon>
        <taxon>Sordariomycetes</taxon>
        <taxon>Hypocreomycetidae</taxon>
        <taxon>Hypocreales</taxon>
        <taxon>Nectriaceae</taxon>
        <taxon>Fusarium</taxon>
    </lineage>
</organism>
<dbReference type="EC" id="2.1.1.-" evidence="9"/>
<dbReference type="EMBL" id="LC025956">
    <property type="protein sequence ID" value="BAR40286.1"/>
    <property type="molecule type" value="Genomic_DNA"/>
</dbReference>
<dbReference type="SMR" id="A0A0E3VJW8"/>
<dbReference type="GO" id="GO:0008171">
    <property type="term" value="F:O-methyltransferase activity"/>
    <property type="evidence" value="ECO:0007669"/>
    <property type="project" value="InterPro"/>
</dbReference>
<dbReference type="GO" id="GO:0032259">
    <property type="term" value="P:methylation"/>
    <property type="evidence" value="ECO:0007669"/>
    <property type="project" value="UniProtKB-KW"/>
</dbReference>
<dbReference type="GO" id="GO:0044550">
    <property type="term" value="P:secondary metabolite biosynthetic process"/>
    <property type="evidence" value="ECO:0007669"/>
    <property type="project" value="UniProtKB-ARBA"/>
</dbReference>
<dbReference type="Gene3D" id="3.40.50.150">
    <property type="entry name" value="Vaccinia Virus protein VP39"/>
    <property type="match status" value="1"/>
</dbReference>
<dbReference type="Gene3D" id="1.10.10.10">
    <property type="entry name" value="Winged helix-like DNA-binding domain superfamily/Winged helix DNA-binding domain"/>
    <property type="match status" value="1"/>
</dbReference>
<dbReference type="InterPro" id="IPR016461">
    <property type="entry name" value="COMT-like"/>
</dbReference>
<dbReference type="InterPro" id="IPR001077">
    <property type="entry name" value="O_MeTrfase_dom"/>
</dbReference>
<dbReference type="InterPro" id="IPR029063">
    <property type="entry name" value="SAM-dependent_MTases_sf"/>
</dbReference>
<dbReference type="InterPro" id="IPR036388">
    <property type="entry name" value="WH-like_DNA-bd_sf"/>
</dbReference>
<dbReference type="InterPro" id="IPR036390">
    <property type="entry name" value="WH_DNA-bd_sf"/>
</dbReference>
<dbReference type="PANTHER" id="PTHR43712:SF11">
    <property type="entry name" value="O-METHYLTRANSFERASE (AFU_ORTHOLOGUE AFUA_2G17820)-RELATED"/>
    <property type="match status" value="1"/>
</dbReference>
<dbReference type="PANTHER" id="PTHR43712">
    <property type="entry name" value="PUTATIVE (AFU_ORTHOLOGUE AFUA_4G14580)-RELATED"/>
    <property type="match status" value="1"/>
</dbReference>
<dbReference type="Pfam" id="PF00891">
    <property type="entry name" value="Methyltransf_2"/>
    <property type="match status" value="1"/>
</dbReference>
<dbReference type="PIRSF" id="PIRSF005739">
    <property type="entry name" value="O-mtase"/>
    <property type="match status" value="1"/>
</dbReference>
<dbReference type="SUPFAM" id="SSF53335">
    <property type="entry name" value="S-adenosyl-L-methionine-dependent methyltransferases"/>
    <property type="match status" value="1"/>
</dbReference>
<dbReference type="SUPFAM" id="SSF46785">
    <property type="entry name" value="Winged helix' DNA-binding domain"/>
    <property type="match status" value="1"/>
</dbReference>
<dbReference type="PROSITE" id="PS51683">
    <property type="entry name" value="SAM_OMT_II"/>
    <property type="match status" value="1"/>
</dbReference>
<name>FSA4_FUSSF</name>
<accession>A0A0E3VJW8</accession>
<proteinExistence type="inferred from homology"/>
<sequence length="359" mass="39665">MSSILSRYPEAETPVHGYFYSMVELAVVRVFVQHQIFDAIADDGTSIEELATKTGMELNLLERLSNFLVASKVLSSPKPGFIGLPSETKMFQQRRAKLFYSHIFDAFMGSAVKWPQYLQNNGLAEPQKSNRSPFGLGAGYPDKSFYDVLEMMPERAQAFNSTMAIGLGDMPITGIYDFSWVAAHSGTDPERTLIVDVGGGKGQAIKAIVEETPSIPASACVLQDLPNVIKDVPEEEGILNQVQKVGSSFFDKQPTKGALVYYIRRVLNDWPDDECVTILKNIREACASDSRLLISENLLPDEPSVSLAAADLWMMNFAGKRRNVRMFNDLASRSGFEISSIAKDKTSNSAVIEMLPVQI</sequence>
<feature type="chain" id="PRO_0000441299" description="Methyltransferase fsa4">
    <location>
        <begin position="1"/>
        <end position="359"/>
    </location>
</feature>
<feature type="binding site" evidence="1">
    <location>
        <begin position="198"/>
        <end position="199"/>
    </location>
    <ligand>
        <name>S-adenosyl-L-methionine</name>
        <dbReference type="ChEBI" id="CHEBI:59789"/>
    </ligand>
</feature>
<feature type="binding site" evidence="2">
    <location>
        <position position="224"/>
    </location>
    <ligand>
        <name>S-adenosyl-L-methionine</name>
        <dbReference type="ChEBI" id="CHEBI:59789"/>
    </ligand>
</feature>
<feature type="binding site" evidence="1">
    <location>
        <begin position="248"/>
        <end position="249"/>
    </location>
    <ligand>
        <name>S-adenosyl-L-methionine</name>
        <dbReference type="ChEBI" id="CHEBI:59789"/>
    </ligand>
</feature>
<feature type="binding site" evidence="1">
    <location>
        <position position="264"/>
    </location>
    <ligand>
        <name>S-adenosyl-L-methionine</name>
        <dbReference type="ChEBI" id="CHEBI:59789"/>
    </ligand>
</feature>
<feature type="binding site" evidence="2">
    <location>
        <position position="265"/>
    </location>
    <ligand>
        <name>S-adenosyl-L-methionine</name>
        <dbReference type="ChEBI" id="CHEBI:59789"/>
    </ligand>
</feature>
<comment type="function">
    <text evidence="3 4 5 6">Methyltransferase; part of the gene cluster that mediates the biosynthesis of HIV-1 integrase inhibitor equisetin and of fusarisetin A, both trans-fused decalin-containing tetramic acids showing also antimicrobial activity (PubMed:25770422). The PKS module of fsa1 together with the enoylreductase fsa3 catalyze the formation of the polyketide unit which is then conjugated to L-serine by the condensation domain of the fsa1 NRPS module (PubMed:25770422). Activity of the Dieckmann cyclase domain (RED) results in release of the Dieckmann product intermediate (PubMed:25770422). Diels-Alderase fsa2 is involved in endo-selective Diels-Alder cycloaddition to form the decalin ring, leading to the production of N-desmethylequisetin also called trichosetin (PubMed:25770422, PubMed:28401214, PubMed:29972614, PubMed:34121297). Subsequent N-methylation is carried out by fsa4 to give equisetin (PubMed:25770422). The enzymatic gene responsible for the conversion of equisetin to fusarisetin A has not been identified yet and is probably located outside of the fsa cluster (PubMed:28401214).</text>
</comment>
<comment type="pathway">
    <text evidence="3">Mycotoxin biosynthesis.</text>
</comment>
<comment type="disruption phenotype">
    <text evidence="3">Results in the loss of production of equisetin and fusarisetin A (PubMed:25770422).</text>
</comment>
<comment type="similarity">
    <text evidence="8">Belongs to the class I-like SAM-binding methyltransferase superfamily. Cation-independent O-methyltransferase family.</text>
</comment>
<evidence type="ECO:0000250" key="1">
    <source>
        <dbReference type="UniProtKB" id="O04385"/>
    </source>
</evidence>
<evidence type="ECO:0000255" key="2">
    <source>
        <dbReference type="PROSITE-ProRule" id="PRU01020"/>
    </source>
</evidence>
<evidence type="ECO:0000269" key="3">
    <source>
    </source>
</evidence>
<evidence type="ECO:0000269" key="4">
    <source>
    </source>
</evidence>
<evidence type="ECO:0000269" key="5">
    <source>
    </source>
</evidence>
<evidence type="ECO:0000269" key="6">
    <source>
    </source>
</evidence>
<evidence type="ECO:0000303" key="7">
    <source>
    </source>
</evidence>
<evidence type="ECO:0000305" key="8"/>
<evidence type="ECO:0000305" key="9">
    <source>
    </source>
</evidence>